<dbReference type="EC" id="6.1.1.15" evidence="1"/>
<dbReference type="EMBL" id="CP000848">
    <property type="protein sequence ID" value="ABV76136.1"/>
    <property type="molecule type" value="Genomic_DNA"/>
</dbReference>
<dbReference type="RefSeq" id="WP_012150726.1">
    <property type="nucleotide sequence ID" value="NZ_CP121767.1"/>
</dbReference>
<dbReference type="SMR" id="A8GRW1"/>
<dbReference type="GeneID" id="79937284"/>
<dbReference type="KEGG" id="rri:A1G_02995"/>
<dbReference type="HOGENOM" id="CLU_016739_4_2_5"/>
<dbReference type="Proteomes" id="UP000006832">
    <property type="component" value="Chromosome"/>
</dbReference>
<dbReference type="GO" id="GO:0005829">
    <property type="term" value="C:cytosol"/>
    <property type="evidence" value="ECO:0007669"/>
    <property type="project" value="TreeGrafter"/>
</dbReference>
<dbReference type="GO" id="GO:0005524">
    <property type="term" value="F:ATP binding"/>
    <property type="evidence" value="ECO:0007669"/>
    <property type="project" value="UniProtKB-UniRule"/>
</dbReference>
<dbReference type="GO" id="GO:0004827">
    <property type="term" value="F:proline-tRNA ligase activity"/>
    <property type="evidence" value="ECO:0007669"/>
    <property type="project" value="UniProtKB-UniRule"/>
</dbReference>
<dbReference type="GO" id="GO:0006433">
    <property type="term" value="P:prolyl-tRNA aminoacylation"/>
    <property type="evidence" value="ECO:0007669"/>
    <property type="project" value="UniProtKB-UniRule"/>
</dbReference>
<dbReference type="CDD" id="cd00861">
    <property type="entry name" value="ProRS_anticodon_short"/>
    <property type="match status" value="1"/>
</dbReference>
<dbReference type="CDD" id="cd00779">
    <property type="entry name" value="ProRS_core_prok"/>
    <property type="match status" value="1"/>
</dbReference>
<dbReference type="FunFam" id="3.30.930.10:FF:000042">
    <property type="entry name" value="probable proline--tRNA ligase, mitochondrial"/>
    <property type="match status" value="1"/>
</dbReference>
<dbReference type="FunFam" id="3.40.50.800:FF:000032">
    <property type="entry name" value="Proline--tRNA ligase"/>
    <property type="match status" value="1"/>
</dbReference>
<dbReference type="Gene3D" id="3.40.50.800">
    <property type="entry name" value="Anticodon-binding domain"/>
    <property type="match status" value="1"/>
</dbReference>
<dbReference type="Gene3D" id="3.30.930.10">
    <property type="entry name" value="Bira Bifunctional Protein, Domain 2"/>
    <property type="match status" value="1"/>
</dbReference>
<dbReference type="HAMAP" id="MF_01570">
    <property type="entry name" value="Pro_tRNA_synth_type2"/>
    <property type="match status" value="1"/>
</dbReference>
<dbReference type="InterPro" id="IPR002314">
    <property type="entry name" value="aa-tRNA-synt_IIb"/>
</dbReference>
<dbReference type="InterPro" id="IPR006195">
    <property type="entry name" value="aa-tRNA-synth_II"/>
</dbReference>
<dbReference type="InterPro" id="IPR045864">
    <property type="entry name" value="aa-tRNA-synth_II/BPL/LPL"/>
</dbReference>
<dbReference type="InterPro" id="IPR004154">
    <property type="entry name" value="Anticodon-bd"/>
</dbReference>
<dbReference type="InterPro" id="IPR036621">
    <property type="entry name" value="Anticodon-bd_dom_sf"/>
</dbReference>
<dbReference type="InterPro" id="IPR002316">
    <property type="entry name" value="Pro-tRNA-ligase_IIa"/>
</dbReference>
<dbReference type="InterPro" id="IPR004500">
    <property type="entry name" value="Pro-tRNA-synth_IIa_bac-type"/>
</dbReference>
<dbReference type="InterPro" id="IPR050062">
    <property type="entry name" value="Pro-tRNA_synthetase"/>
</dbReference>
<dbReference type="InterPro" id="IPR023716">
    <property type="entry name" value="Prolyl-tRNA_ligase_IIa_type2"/>
</dbReference>
<dbReference type="InterPro" id="IPR044140">
    <property type="entry name" value="ProRS_anticodon_short"/>
</dbReference>
<dbReference type="InterPro" id="IPR033730">
    <property type="entry name" value="ProRS_core_prok"/>
</dbReference>
<dbReference type="NCBIfam" id="NF008979">
    <property type="entry name" value="PRK12325.1"/>
    <property type="match status" value="1"/>
</dbReference>
<dbReference type="NCBIfam" id="TIGR00409">
    <property type="entry name" value="proS_fam_II"/>
    <property type="match status" value="1"/>
</dbReference>
<dbReference type="PANTHER" id="PTHR42753">
    <property type="entry name" value="MITOCHONDRIAL RIBOSOME PROTEIN L39/PROLYL-TRNA LIGASE FAMILY MEMBER"/>
    <property type="match status" value="1"/>
</dbReference>
<dbReference type="PANTHER" id="PTHR42753:SF2">
    <property type="entry name" value="PROLINE--TRNA LIGASE"/>
    <property type="match status" value="1"/>
</dbReference>
<dbReference type="Pfam" id="PF03129">
    <property type="entry name" value="HGTP_anticodon"/>
    <property type="match status" value="1"/>
</dbReference>
<dbReference type="Pfam" id="PF00587">
    <property type="entry name" value="tRNA-synt_2b"/>
    <property type="match status" value="1"/>
</dbReference>
<dbReference type="PRINTS" id="PR01046">
    <property type="entry name" value="TRNASYNTHPRO"/>
</dbReference>
<dbReference type="SUPFAM" id="SSF52954">
    <property type="entry name" value="Class II aaRS ABD-related"/>
    <property type="match status" value="1"/>
</dbReference>
<dbReference type="SUPFAM" id="SSF55681">
    <property type="entry name" value="Class II aaRS and biotin synthetases"/>
    <property type="match status" value="1"/>
</dbReference>
<dbReference type="PROSITE" id="PS50862">
    <property type="entry name" value="AA_TRNA_LIGASE_II"/>
    <property type="match status" value="1"/>
</dbReference>
<accession>A8GRW1</accession>
<keyword id="KW-0030">Aminoacyl-tRNA synthetase</keyword>
<keyword id="KW-0067">ATP-binding</keyword>
<keyword id="KW-0963">Cytoplasm</keyword>
<keyword id="KW-0436">Ligase</keyword>
<keyword id="KW-0547">Nucleotide-binding</keyword>
<keyword id="KW-0648">Protein biosynthesis</keyword>
<name>SYP_RICRS</name>
<evidence type="ECO:0000255" key="1">
    <source>
        <dbReference type="HAMAP-Rule" id="MF_01570"/>
    </source>
</evidence>
<comment type="function">
    <text evidence="1">Catalyzes the attachment of proline to tRNA(Pro) in a two-step reaction: proline is first activated by ATP to form Pro-AMP and then transferred to the acceptor end of tRNA(Pro).</text>
</comment>
<comment type="catalytic activity">
    <reaction evidence="1">
        <text>tRNA(Pro) + L-proline + ATP = L-prolyl-tRNA(Pro) + AMP + diphosphate</text>
        <dbReference type="Rhea" id="RHEA:14305"/>
        <dbReference type="Rhea" id="RHEA-COMP:9700"/>
        <dbReference type="Rhea" id="RHEA-COMP:9702"/>
        <dbReference type="ChEBI" id="CHEBI:30616"/>
        <dbReference type="ChEBI" id="CHEBI:33019"/>
        <dbReference type="ChEBI" id="CHEBI:60039"/>
        <dbReference type="ChEBI" id="CHEBI:78442"/>
        <dbReference type="ChEBI" id="CHEBI:78532"/>
        <dbReference type="ChEBI" id="CHEBI:456215"/>
        <dbReference type="EC" id="6.1.1.15"/>
    </reaction>
</comment>
<comment type="subunit">
    <text evidence="1">Homodimer.</text>
</comment>
<comment type="subcellular location">
    <subcellularLocation>
        <location evidence="1">Cytoplasm</location>
    </subcellularLocation>
</comment>
<comment type="similarity">
    <text evidence="1">Belongs to the class-II aminoacyl-tRNA synthetase family. ProS type 2 subfamily.</text>
</comment>
<sequence>MLLSKYFLPVLKEEPSEAQVTSHKLMLRSGMIRQQAAGIYTWLPLGLKVLKNIENIVRLNMNKAGALEVLMPCIQPAHLWMESGRFDNYGKEMLKFQDRHDNTLLFGPTNEDMITDIFRHNIKSYKDLPKNLYHIQWKFRDEIRPRFGVMRGREFLMKDAYSFDINEENAVKTYNQMYKAYINAFRDLGVFAIPVIADNGPIGGNLSHEFHIIAETGESTIYYDKKFKILKDNPDIDVEEIKSWYAAAEEKYEVNKLPISEQEITSSKGIEVGHIFYIGSKYSVNMNALINDEYGKLTPIEMSSYGIGISRLVAAIIEANCDEKGIIWPSSVAPFKVSLINLNIHDSKCVELAEMAYKELSDKNIEVLYDDTEARPGSKFATHDLIGSPHQIIIGPKKAANNIVELKDRKSGVIEDIEVGSLMSVL</sequence>
<protein>
    <recommendedName>
        <fullName evidence="1">Proline--tRNA ligase</fullName>
        <ecNumber evidence="1">6.1.1.15</ecNumber>
    </recommendedName>
    <alternativeName>
        <fullName evidence="1">Prolyl-tRNA synthetase</fullName>
        <shortName evidence="1">ProRS</shortName>
    </alternativeName>
</protein>
<gene>
    <name evidence="1" type="primary">proS</name>
    <name type="ordered locus">A1G_02995</name>
</gene>
<reference key="1">
    <citation type="submission" date="2007-09" db="EMBL/GenBank/DDBJ databases">
        <title>Complete genome sequence of Rickettsia rickettsii.</title>
        <authorList>
            <person name="Madan A."/>
            <person name="Fahey J."/>
            <person name="Helton E."/>
            <person name="Ketteman M."/>
            <person name="Madan A."/>
            <person name="Rodrigues S."/>
            <person name="Sanchez A."/>
            <person name="Dasch G."/>
            <person name="Eremeeva M."/>
        </authorList>
    </citation>
    <scope>NUCLEOTIDE SEQUENCE [LARGE SCALE GENOMIC DNA]</scope>
    <source>
        <strain>Sheila Smith</strain>
    </source>
</reference>
<feature type="chain" id="PRO_1000069186" description="Proline--tRNA ligase">
    <location>
        <begin position="1"/>
        <end position="426"/>
    </location>
</feature>
<organism>
    <name type="scientific">Rickettsia rickettsii (strain Sheila Smith)</name>
    <dbReference type="NCBI Taxonomy" id="392021"/>
    <lineage>
        <taxon>Bacteria</taxon>
        <taxon>Pseudomonadati</taxon>
        <taxon>Pseudomonadota</taxon>
        <taxon>Alphaproteobacteria</taxon>
        <taxon>Rickettsiales</taxon>
        <taxon>Rickettsiaceae</taxon>
        <taxon>Rickettsieae</taxon>
        <taxon>Rickettsia</taxon>
        <taxon>spotted fever group</taxon>
    </lineage>
</organism>
<proteinExistence type="inferred from homology"/>